<protein>
    <recommendedName>
        <fullName>Probable transporter MCH1</fullName>
    </recommendedName>
</protein>
<feature type="chain" id="PRO_0000084873" description="Probable transporter MCH1">
    <location>
        <begin position="1"/>
        <end position="489"/>
    </location>
</feature>
<feature type="transmembrane region" description="Helical" evidence="2">
    <location>
        <begin position="34"/>
        <end position="54"/>
    </location>
</feature>
<feature type="transmembrane region" description="Helical" evidence="2">
    <location>
        <begin position="68"/>
        <end position="88"/>
    </location>
</feature>
<feature type="transmembrane region" description="Helical" evidence="2">
    <location>
        <begin position="94"/>
        <end position="114"/>
    </location>
</feature>
<feature type="transmembrane region" description="Helical" evidence="2">
    <location>
        <begin position="124"/>
        <end position="144"/>
    </location>
</feature>
<feature type="transmembrane region" description="Helical" evidence="2">
    <location>
        <begin position="156"/>
        <end position="175"/>
    </location>
</feature>
<feature type="transmembrane region" description="Helical" evidence="2">
    <location>
        <begin position="196"/>
        <end position="216"/>
    </location>
</feature>
<feature type="transmembrane region" description="Helical" evidence="2">
    <location>
        <begin position="262"/>
        <end position="282"/>
    </location>
</feature>
<feature type="transmembrane region" description="Helical" evidence="2">
    <location>
        <begin position="302"/>
        <end position="324"/>
    </location>
</feature>
<feature type="transmembrane region" description="Helical" evidence="2">
    <location>
        <begin position="335"/>
        <end position="355"/>
    </location>
</feature>
<feature type="transmembrane region" description="Helical" evidence="2">
    <location>
        <begin position="359"/>
        <end position="379"/>
    </location>
</feature>
<feature type="transmembrane region" description="Helical" evidence="2">
    <location>
        <begin position="403"/>
        <end position="423"/>
    </location>
</feature>
<feature type="transmembrane region" description="Helical" evidence="2">
    <location>
        <begin position="463"/>
        <end position="483"/>
    </location>
</feature>
<dbReference type="EMBL" id="AJ306295">
    <property type="protein sequence ID" value="CAC69140.1"/>
    <property type="molecule type" value="Genomic_DNA"/>
</dbReference>
<dbReference type="SMR" id="Q96TW9"/>
<dbReference type="GO" id="GO:0000329">
    <property type="term" value="C:fungal-type vacuole membrane"/>
    <property type="evidence" value="ECO:0007669"/>
    <property type="project" value="TreeGrafter"/>
</dbReference>
<dbReference type="GO" id="GO:0022857">
    <property type="term" value="F:transmembrane transporter activity"/>
    <property type="evidence" value="ECO:0007669"/>
    <property type="project" value="InterPro"/>
</dbReference>
<dbReference type="CDD" id="cd17354">
    <property type="entry name" value="MFS_Mch1p_like"/>
    <property type="match status" value="1"/>
</dbReference>
<dbReference type="Gene3D" id="1.20.1250.20">
    <property type="entry name" value="MFS general substrate transporter like domains"/>
    <property type="match status" value="1"/>
</dbReference>
<dbReference type="InterPro" id="IPR011701">
    <property type="entry name" value="MFS"/>
</dbReference>
<dbReference type="InterPro" id="IPR036259">
    <property type="entry name" value="MFS_trans_sf"/>
</dbReference>
<dbReference type="PANTHER" id="PTHR21576:SF45">
    <property type="entry name" value="TRANSPORTER MCH1-RELATED"/>
    <property type="match status" value="1"/>
</dbReference>
<dbReference type="PANTHER" id="PTHR21576">
    <property type="entry name" value="UNCHARACTERIZED NODULIN-LIKE PROTEIN"/>
    <property type="match status" value="1"/>
</dbReference>
<dbReference type="Pfam" id="PF07690">
    <property type="entry name" value="MFS_1"/>
    <property type="match status" value="1"/>
</dbReference>
<dbReference type="SUPFAM" id="SSF103473">
    <property type="entry name" value="MFS general substrate transporter"/>
    <property type="match status" value="1"/>
</dbReference>
<name>MCH1_WICAO</name>
<gene>
    <name type="primary">MCH1</name>
    <name type="ORF">PaYDL054c</name>
</gene>
<comment type="function">
    <text evidence="1">Probable transporter.</text>
</comment>
<comment type="subcellular location">
    <subcellularLocation>
        <location evidence="1">Vacuole membrane</location>
        <topology evidence="1">Multi-pass membrane protein</topology>
    </subcellularLocation>
</comment>
<comment type="similarity">
    <text evidence="3">Belongs to the major facilitator superfamily.</text>
</comment>
<accession>Q96TW9</accession>
<organism>
    <name type="scientific">Wickerhamomyces anomalus</name>
    <name type="common">Yeast</name>
    <name type="synonym">Hansenula anomala</name>
    <dbReference type="NCBI Taxonomy" id="4927"/>
    <lineage>
        <taxon>Eukaryota</taxon>
        <taxon>Fungi</taxon>
        <taxon>Dikarya</taxon>
        <taxon>Ascomycota</taxon>
        <taxon>Saccharomycotina</taxon>
        <taxon>Saccharomycetes</taxon>
        <taxon>Phaffomycetales</taxon>
        <taxon>Wickerhamomycetaceae</taxon>
        <taxon>Wickerhamomyces</taxon>
    </lineage>
</organism>
<keyword id="KW-0472">Membrane</keyword>
<keyword id="KW-0812">Transmembrane</keyword>
<keyword id="KW-1133">Transmembrane helix</keyword>
<keyword id="KW-0813">Transport</keyword>
<keyword id="KW-0926">Vacuole</keyword>
<evidence type="ECO:0000250" key="1"/>
<evidence type="ECO:0000255" key="2"/>
<evidence type="ECO:0000305" key="3"/>
<reference key="1">
    <citation type="journal article" date="2001" name="Yeast">
        <title>The sequence of a 15 769 bp segment of Pichia anomala identifies the SEC61 and FBP1 genes and five new open reading frames.</title>
        <authorList>
            <person name="Ruiz T."/>
            <person name="Sanchez M."/>
            <person name="de la Rosa J.M."/>
            <person name="Rodriguez L."/>
            <person name="Dominguez A."/>
        </authorList>
    </citation>
    <scope>NUCLEOTIDE SEQUENCE [GENOMIC DNA]</scope>
    <source>
        <strain>ATCC 36904 / CBS 1982 / NCYC 435 / NRRL Y-2153-4</strain>
    </source>
</reference>
<sequence length="489" mass="54230">MALSSIETALTKHIRSLLQTHFSTKSLKRLACSISLISCLCAGSVLLFALFTPVLQHQLHYTQFQINIIGSFTSIGMYLPLPVLGYLADCHGPVLLSVISVLFFSPGYTLAATVVQNDWSFWYLAISFGLIGCATSALYFTALLTCAKIYPKSKGLTISAPVTCYGLSSLIGSRVLKLSCLQKNGDLDLYRCFKLFSFLYFFLGLFDWVSASVVSIERDVLLRKHEDGENTPLLTDPNQEHENNDDLVPNHKSKFLKFIKDISTYVLLFSLLLSIGPSEMYITNMGSLVKAITPNSLISDQVAIHAVFSTLSRLSLGALSDFLVTNYQISRSWLLLSIIVLGFFTQIFIATSTFVKDQYYIISALSGFSYGGLFTLYPTVIFSIWGPEIFGSAWGSFMIAPAIGSTTFGMVFGLVYDSACGVFAESTTGNCVSLVFLDQLLSIRLQCSTVTHCMEGDLDQKRSLIIINHLHYIKYIYLLILRIHLSRET</sequence>
<proteinExistence type="inferred from homology"/>